<gene>
    <name type="primary">gyrB</name>
</gene>
<comment type="function">
    <text evidence="1">A type II topoisomerase that negatively supercoils closed circular double-stranded (ds) DNA in an ATP-dependent manner to modulate DNA topology and maintain chromosomes in an underwound state. Negative supercoiling favors strand separation, and DNA replication, transcription, recombination and repair, all of which involve strand separation. Also able to catalyze the interconversion of other topological isomers of dsDNA rings, including catenanes and knotted rings. Type II topoisomerases break and join 2 DNA strands simultaneously in an ATP-dependent manner.</text>
</comment>
<comment type="catalytic activity">
    <reaction evidence="1">
        <text>ATP-dependent breakage, passage and rejoining of double-stranded DNA.</text>
        <dbReference type="EC" id="5.6.2.2"/>
    </reaction>
</comment>
<comment type="subunit">
    <text evidence="1">Heterotetramer, composed of two GyrA and two GyrB chains. In the heterotetramer, GyrA contains the active site tyrosine that forms a transient covalent intermediate with DNA, while GyrB binds cofactors and catalyzes ATP hydrolysis.</text>
</comment>
<comment type="subcellular location">
    <subcellularLocation>
        <location evidence="1">Cytoplasm</location>
    </subcellularLocation>
</comment>
<comment type="miscellaneous">
    <text evidence="1">Few gyrases are as efficient as E.coli at forming negative supercoils. Not all organisms have 2 type II topoisomerases; in organisms with a single type II topoisomerase this enzyme also has to decatenate newly replicated chromosomes.</text>
</comment>
<comment type="similarity">
    <text evidence="2">Belongs to the type II topoisomerase GyrB family.</text>
</comment>
<keyword id="KW-0067">ATP-binding</keyword>
<keyword id="KW-0963">Cytoplasm</keyword>
<keyword id="KW-0238">DNA-binding</keyword>
<keyword id="KW-0413">Isomerase</keyword>
<keyword id="KW-0547">Nucleotide-binding</keyword>
<keyword id="KW-0799">Topoisomerase</keyword>
<sequence length="134" mass="14961">EFVKYLDRSKTAVMPDPIYMVGEVRGIGVEVAMWWNDSYHETVLPFTNNIPQRDGGTHLAGFRGALTRTITKYAQDSGIAKREKIDFTGDDAREGLTCVLSVKVPDPKFSSQTKDKLVSSEVRPAVENLVNEKL</sequence>
<protein>
    <recommendedName>
        <fullName>DNA gyrase subunit B</fullName>
        <ecNumber evidence="1">5.6.2.2</ecNumber>
    </recommendedName>
</protein>
<reference key="1">
    <citation type="journal article" date="1992" name="FEMS Microbiol. Lett.">
        <title>DNA gyrase activities from Rhodobacter capsulatus: analysis of target(s) of coumarins and cloning of the gyrB locus.</title>
        <authorList>
            <person name="Kranz R.G."/>
            <person name="Beckman D.L."/>
            <person name="Foster-Hartnett D."/>
        </authorList>
    </citation>
    <scope>NUCLEOTIDE SEQUENCE [GENOMIC DNA]</scope>
</reference>
<evidence type="ECO:0000250" key="1">
    <source>
        <dbReference type="UniProtKB" id="P0AES6"/>
    </source>
</evidence>
<evidence type="ECO:0000305" key="2"/>
<accession>P31860</accession>
<dbReference type="EC" id="5.6.2.2" evidence="1"/>
<dbReference type="SMR" id="P31860"/>
<dbReference type="GO" id="GO:0005737">
    <property type="term" value="C:cytoplasm"/>
    <property type="evidence" value="ECO:0007669"/>
    <property type="project" value="UniProtKB-SubCell"/>
</dbReference>
<dbReference type="GO" id="GO:0005524">
    <property type="term" value="F:ATP binding"/>
    <property type="evidence" value="ECO:0007669"/>
    <property type="project" value="UniProtKB-KW"/>
</dbReference>
<dbReference type="GO" id="GO:0003677">
    <property type="term" value="F:DNA binding"/>
    <property type="evidence" value="ECO:0007669"/>
    <property type="project" value="UniProtKB-KW"/>
</dbReference>
<dbReference type="GO" id="GO:0003918">
    <property type="term" value="F:DNA topoisomerase type II (double strand cut, ATP-hydrolyzing) activity"/>
    <property type="evidence" value="ECO:0007669"/>
    <property type="project" value="UniProtKB-EC"/>
</dbReference>
<dbReference type="GO" id="GO:0006265">
    <property type="term" value="P:DNA topological change"/>
    <property type="evidence" value="ECO:0007669"/>
    <property type="project" value="InterPro"/>
</dbReference>
<dbReference type="CDD" id="cd00822">
    <property type="entry name" value="TopoII_Trans_DNA_gyrase"/>
    <property type="match status" value="1"/>
</dbReference>
<dbReference type="Gene3D" id="3.30.230.10">
    <property type="match status" value="1"/>
</dbReference>
<dbReference type="InterPro" id="IPR020568">
    <property type="entry name" value="Ribosomal_Su5_D2-typ_SF"/>
</dbReference>
<dbReference type="InterPro" id="IPR014721">
    <property type="entry name" value="Ribsml_uS5_D2-typ_fold_subgr"/>
</dbReference>
<dbReference type="InterPro" id="IPR000565">
    <property type="entry name" value="Topo_IIA_B"/>
</dbReference>
<dbReference type="InterPro" id="IPR013506">
    <property type="entry name" value="Topo_IIA_bsu_dom2"/>
</dbReference>
<dbReference type="PANTHER" id="PTHR45866:SF1">
    <property type="entry name" value="DNA GYRASE SUBUNIT B, MITOCHONDRIAL"/>
    <property type="match status" value="1"/>
</dbReference>
<dbReference type="PANTHER" id="PTHR45866">
    <property type="entry name" value="DNA GYRASE/TOPOISOMERASE SUBUNIT B"/>
    <property type="match status" value="1"/>
</dbReference>
<dbReference type="Pfam" id="PF00204">
    <property type="entry name" value="DNA_gyraseB"/>
    <property type="match status" value="1"/>
</dbReference>
<dbReference type="PRINTS" id="PR01159">
    <property type="entry name" value="DNAGYRASEB"/>
</dbReference>
<dbReference type="SUPFAM" id="SSF54211">
    <property type="entry name" value="Ribosomal protein S5 domain 2-like"/>
    <property type="match status" value="1"/>
</dbReference>
<proteinExistence type="inferred from homology"/>
<feature type="chain" id="PRO_0000145330" description="DNA gyrase subunit B">
    <location>
        <begin position="1" status="less than"/>
        <end position="134" status="greater than"/>
    </location>
</feature>
<feature type="non-terminal residue">
    <location>
        <position position="1"/>
    </location>
</feature>
<feature type="non-terminal residue">
    <location>
        <position position="134"/>
    </location>
</feature>
<organism>
    <name type="scientific">Rhodobacter capsulatus</name>
    <name type="common">Rhodopseudomonas capsulata</name>
    <dbReference type="NCBI Taxonomy" id="1061"/>
    <lineage>
        <taxon>Bacteria</taxon>
        <taxon>Pseudomonadati</taxon>
        <taxon>Pseudomonadota</taxon>
        <taxon>Alphaproteobacteria</taxon>
        <taxon>Rhodobacterales</taxon>
        <taxon>Rhodobacter group</taxon>
        <taxon>Rhodobacter</taxon>
    </lineage>
</organism>
<name>GYRB_RHOCA</name>